<dbReference type="EMBL" id="AM286415">
    <property type="protein sequence ID" value="CAL11596.1"/>
    <property type="molecule type" value="Genomic_DNA"/>
</dbReference>
<dbReference type="RefSeq" id="WP_004389612.1">
    <property type="nucleotide sequence ID" value="NC_008800.1"/>
</dbReference>
<dbReference type="RefSeq" id="YP_001005813.1">
    <property type="nucleotide sequence ID" value="NC_008800.1"/>
</dbReference>
<dbReference type="SMR" id="A1JMC5"/>
<dbReference type="GeneID" id="97455661"/>
<dbReference type="KEGG" id="yen:YE1517"/>
<dbReference type="PATRIC" id="fig|393305.7.peg.1642"/>
<dbReference type="eggNOG" id="COG2127">
    <property type="taxonomic scope" value="Bacteria"/>
</dbReference>
<dbReference type="HOGENOM" id="CLU_134358_2_1_6"/>
<dbReference type="OrthoDB" id="9796121at2"/>
<dbReference type="Proteomes" id="UP000000642">
    <property type="component" value="Chromosome"/>
</dbReference>
<dbReference type="GO" id="GO:0030163">
    <property type="term" value="P:protein catabolic process"/>
    <property type="evidence" value="ECO:0007669"/>
    <property type="project" value="InterPro"/>
</dbReference>
<dbReference type="GO" id="GO:0006508">
    <property type="term" value="P:proteolysis"/>
    <property type="evidence" value="ECO:0007669"/>
    <property type="project" value="UniProtKB-UniRule"/>
</dbReference>
<dbReference type="FunFam" id="3.30.1390.10:FF:000002">
    <property type="entry name" value="ATP-dependent Clp protease adapter protein ClpS"/>
    <property type="match status" value="1"/>
</dbReference>
<dbReference type="Gene3D" id="3.30.1390.10">
    <property type="match status" value="1"/>
</dbReference>
<dbReference type="HAMAP" id="MF_00302">
    <property type="entry name" value="ClpS"/>
    <property type="match status" value="1"/>
</dbReference>
<dbReference type="InterPro" id="IPR022935">
    <property type="entry name" value="ClpS"/>
</dbReference>
<dbReference type="InterPro" id="IPR003769">
    <property type="entry name" value="ClpS_core"/>
</dbReference>
<dbReference type="InterPro" id="IPR014719">
    <property type="entry name" value="Ribosomal_bL12_C/ClpS-like"/>
</dbReference>
<dbReference type="NCBIfam" id="NF000670">
    <property type="entry name" value="PRK00033.1-3"/>
    <property type="match status" value="1"/>
</dbReference>
<dbReference type="NCBIfam" id="NF000672">
    <property type="entry name" value="PRK00033.1-5"/>
    <property type="match status" value="1"/>
</dbReference>
<dbReference type="PANTHER" id="PTHR33473:SF19">
    <property type="entry name" value="ATP-DEPENDENT CLP PROTEASE ADAPTER PROTEIN CLPS"/>
    <property type="match status" value="1"/>
</dbReference>
<dbReference type="PANTHER" id="PTHR33473">
    <property type="entry name" value="ATP-DEPENDENT CLP PROTEASE ADAPTER PROTEIN CLPS1, CHLOROPLASTIC"/>
    <property type="match status" value="1"/>
</dbReference>
<dbReference type="Pfam" id="PF02617">
    <property type="entry name" value="ClpS"/>
    <property type="match status" value="1"/>
</dbReference>
<dbReference type="SUPFAM" id="SSF54736">
    <property type="entry name" value="ClpS-like"/>
    <property type="match status" value="1"/>
</dbReference>
<name>CLPS_YERE8</name>
<feature type="chain" id="PRO_0000300734" description="ATP-dependent Clp protease adapter protein ClpS">
    <location>
        <begin position="1"/>
        <end position="106"/>
    </location>
</feature>
<gene>
    <name evidence="1" type="primary">clpS</name>
    <name type="ordered locus">YE1517</name>
</gene>
<proteinExistence type="inferred from homology"/>
<accession>A1JMC5</accession>
<reference key="1">
    <citation type="journal article" date="2006" name="PLoS Genet.">
        <title>The complete genome sequence and comparative genome analysis of the high pathogenicity Yersinia enterocolitica strain 8081.</title>
        <authorList>
            <person name="Thomson N.R."/>
            <person name="Howard S."/>
            <person name="Wren B.W."/>
            <person name="Holden M.T.G."/>
            <person name="Crossman L."/>
            <person name="Challis G.L."/>
            <person name="Churcher C."/>
            <person name="Mungall K."/>
            <person name="Brooks K."/>
            <person name="Chillingworth T."/>
            <person name="Feltwell T."/>
            <person name="Abdellah Z."/>
            <person name="Hauser H."/>
            <person name="Jagels K."/>
            <person name="Maddison M."/>
            <person name="Moule S."/>
            <person name="Sanders M."/>
            <person name="Whitehead S."/>
            <person name="Quail M.A."/>
            <person name="Dougan G."/>
            <person name="Parkhill J."/>
            <person name="Prentice M.B."/>
        </authorList>
    </citation>
    <scope>NUCLEOTIDE SEQUENCE [LARGE SCALE GENOMIC DNA]</scope>
    <source>
        <strain>NCTC 13174 / 8081</strain>
    </source>
</reference>
<sequence>MGKNNDWLNFEHLVKDKQIEALKPPSMYKVILNNDDYTPMEFVIDVLQKFFSYDIERATQLMLNVHYQGKAICGVFTAEVAETKVAHVNQYARENEHPLLCTLEKA</sequence>
<organism>
    <name type="scientific">Yersinia enterocolitica serotype O:8 / biotype 1B (strain NCTC 13174 / 8081)</name>
    <dbReference type="NCBI Taxonomy" id="393305"/>
    <lineage>
        <taxon>Bacteria</taxon>
        <taxon>Pseudomonadati</taxon>
        <taxon>Pseudomonadota</taxon>
        <taxon>Gammaproteobacteria</taxon>
        <taxon>Enterobacterales</taxon>
        <taxon>Yersiniaceae</taxon>
        <taxon>Yersinia</taxon>
    </lineage>
</organism>
<comment type="function">
    <text evidence="1">Involved in the modulation of the specificity of the ClpAP-mediated ATP-dependent protein degradation.</text>
</comment>
<comment type="subunit">
    <text evidence="1">Binds to the N-terminal domain of the chaperone ClpA.</text>
</comment>
<comment type="similarity">
    <text evidence="1">Belongs to the ClpS family.</text>
</comment>
<protein>
    <recommendedName>
        <fullName evidence="1">ATP-dependent Clp protease adapter protein ClpS</fullName>
    </recommendedName>
</protein>
<evidence type="ECO:0000255" key="1">
    <source>
        <dbReference type="HAMAP-Rule" id="MF_00302"/>
    </source>
</evidence>